<organism>
    <name type="scientific">Pseudothermotoga lettingae (strain ATCC BAA-301 / DSM 14385 / NBRC 107922 / TMO)</name>
    <name type="common">Thermotoga lettingae</name>
    <dbReference type="NCBI Taxonomy" id="416591"/>
    <lineage>
        <taxon>Bacteria</taxon>
        <taxon>Thermotogati</taxon>
        <taxon>Thermotogota</taxon>
        <taxon>Thermotogae</taxon>
        <taxon>Thermotogales</taxon>
        <taxon>Thermotogaceae</taxon>
        <taxon>Pseudothermotoga</taxon>
    </lineage>
</organism>
<gene>
    <name evidence="1" type="primary">fabZ</name>
    <name type="ordered locus">Tlet_0428</name>
</gene>
<comment type="function">
    <text evidence="1">Involved in unsaturated fatty acids biosynthesis. Catalyzes the dehydration of short chain beta-hydroxyacyl-ACPs and long chain saturated and unsaturated beta-hydroxyacyl-ACPs.</text>
</comment>
<comment type="catalytic activity">
    <reaction evidence="1">
        <text>a (3R)-hydroxyacyl-[ACP] = a (2E)-enoyl-[ACP] + H2O</text>
        <dbReference type="Rhea" id="RHEA:13097"/>
        <dbReference type="Rhea" id="RHEA-COMP:9925"/>
        <dbReference type="Rhea" id="RHEA-COMP:9945"/>
        <dbReference type="ChEBI" id="CHEBI:15377"/>
        <dbReference type="ChEBI" id="CHEBI:78784"/>
        <dbReference type="ChEBI" id="CHEBI:78827"/>
        <dbReference type="EC" id="4.2.1.59"/>
    </reaction>
</comment>
<comment type="subcellular location">
    <subcellularLocation>
        <location evidence="1">Cytoplasm</location>
    </subcellularLocation>
</comment>
<comment type="similarity">
    <text evidence="1">Belongs to the thioester dehydratase family. FabZ subfamily.</text>
</comment>
<protein>
    <recommendedName>
        <fullName evidence="1">3-hydroxyacyl-[acyl-carrier-protein] dehydratase FabZ</fullName>
        <ecNumber evidence="1">4.2.1.59</ecNumber>
    </recommendedName>
    <alternativeName>
        <fullName evidence="1">(3R)-hydroxymyristoyl-[acyl-carrier-protein] dehydratase</fullName>
        <shortName evidence="1">(3R)-hydroxymyristoyl-ACP dehydrase</shortName>
    </alternativeName>
    <alternativeName>
        <fullName evidence="1">Beta-hydroxyacyl-ACP dehydratase</fullName>
    </alternativeName>
</protein>
<evidence type="ECO:0000255" key="1">
    <source>
        <dbReference type="HAMAP-Rule" id="MF_00406"/>
    </source>
</evidence>
<reference key="1">
    <citation type="submission" date="2007-08" db="EMBL/GenBank/DDBJ databases">
        <title>Complete sequence of Thermotoga lettingae TMO.</title>
        <authorList>
            <consortium name="US DOE Joint Genome Institute"/>
            <person name="Copeland A."/>
            <person name="Lucas S."/>
            <person name="Lapidus A."/>
            <person name="Barry K."/>
            <person name="Glavina del Rio T."/>
            <person name="Dalin E."/>
            <person name="Tice H."/>
            <person name="Pitluck S."/>
            <person name="Foster B."/>
            <person name="Bruce D."/>
            <person name="Schmutz J."/>
            <person name="Larimer F."/>
            <person name="Land M."/>
            <person name="Hauser L."/>
            <person name="Kyrpides N."/>
            <person name="Mikhailova N."/>
            <person name="Nelson K."/>
            <person name="Gogarten J.P."/>
            <person name="Noll K."/>
            <person name="Richardson P."/>
        </authorList>
    </citation>
    <scope>NUCLEOTIDE SEQUENCE [LARGE SCALE GENOMIC DNA]</scope>
    <source>
        <strain>ATCC BAA-301 / DSM 14385 / NBRC 107922 / TMO</strain>
    </source>
</reference>
<sequence length="140" mass="15594">MNIDEIKQILPHRFPMLLVDRIVEKSEDHAKAIKNVTASEIFFLGHFPAYPIYPGVLIIEGLAQTAGLMLLNRGESVIPVFAGIDNARFKSEVRPGDVLEYEVWLKERKLGMAKVEAIAKVQGKIVATATLLVGVRKNEK</sequence>
<dbReference type="EC" id="4.2.1.59" evidence="1"/>
<dbReference type="EMBL" id="CP000812">
    <property type="protein sequence ID" value="ABV32995.1"/>
    <property type="molecule type" value="Genomic_DNA"/>
</dbReference>
<dbReference type="RefSeq" id="WP_012002476.1">
    <property type="nucleotide sequence ID" value="NZ_BSDV01000001.1"/>
</dbReference>
<dbReference type="SMR" id="A8F4B1"/>
<dbReference type="STRING" id="416591.Tlet_0428"/>
<dbReference type="KEGG" id="tle:Tlet_0428"/>
<dbReference type="eggNOG" id="COG0764">
    <property type="taxonomic scope" value="Bacteria"/>
</dbReference>
<dbReference type="HOGENOM" id="CLU_078912_1_2_0"/>
<dbReference type="OrthoDB" id="9772788at2"/>
<dbReference type="Proteomes" id="UP000002016">
    <property type="component" value="Chromosome"/>
</dbReference>
<dbReference type="GO" id="GO:0005737">
    <property type="term" value="C:cytoplasm"/>
    <property type="evidence" value="ECO:0007669"/>
    <property type="project" value="UniProtKB-SubCell"/>
</dbReference>
<dbReference type="GO" id="GO:0016020">
    <property type="term" value="C:membrane"/>
    <property type="evidence" value="ECO:0007669"/>
    <property type="project" value="GOC"/>
</dbReference>
<dbReference type="GO" id="GO:0019171">
    <property type="term" value="F:(3R)-hydroxyacyl-[acyl-carrier-protein] dehydratase activity"/>
    <property type="evidence" value="ECO:0007669"/>
    <property type="project" value="UniProtKB-EC"/>
</dbReference>
<dbReference type="GO" id="GO:0006633">
    <property type="term" value="P:fatty acid biosynthetic process"/>
    <property type="evidence" value="ECO:0007669"/>
    <property type="project" value="UniProtKB-UniRule"/>
</dbReference>
<dbReference type="GO" id="GO:0009245">
    <property type="term" value="P:lipid A biosynthetic process"/>
    <property type="evidence" value="ECO:0007669"/>
    <property type="project" value="UniProtKB-UniRule"/>
</dbReference>
<dbReference type="CDD" id="cd01288">
    <property type="entry name" value="FabZ"/>
    <property type="match status" value="1"/>
</dbReference>
<dbReference type="FunFam" id="3.10.129.10:FF:000001">
    <property type="entry name" value="3-hydroxyacyl-[acyl-carrier-protein] dehydratase FabZ"/>
    <property type="match status" value="1"/>
</dbReference>
<dbReference type="Gene3D" id="3.10.129.10">
    <property type="entry name" value="Hotdog Thioesterase"/>
    <property type="match status" value="1"/>
</dbReference>
<dbReference type="HAMAP" id="MF_00406">
    <property type="entry name" value="FabZ"/>
    <property type="match status" value="1"/>
</dbReference>
<dbReference type="InterPro" id="IPR013114">
    <property type="entry name" value="FabA_FabZ"/>
</dbReference>
<dbReference type="InterPro" id="IPR010084">
    <property type="entry name" value="FabZ"/>
</dbReference>
<dbReference type="InterPro" id="IPR029069">
    <property type="entry name" value="HotDog_dom_sf"/>
</dbReference>
<dbReference type="NCBIfam" id="TIGR01750">
    <property type="entry name" value="fabZ"/>
    <property type="match status" value="1"/>
</dbReference>
<dbReference type="NCBIfam" id="NF000582">
    <property type="entry name" value="PRK00006.1"/>
    <property type="match status" value="1"/>
</dbReference>
<dbReference type="PANTHER" id="PTHR30272">
    <property type="entry name" value="3-HYDROXYACYL-[ACYL-CARRIER-PROTEIN] DEHYDRATASE"/>
    <property type="match status" value="1"/>
</dbReference>
<dbReference type="PANTHER" id="PTHR30272:SF1">
    <property type="entry name" value="3-HYDROXYACYL-[ACYL-CARRIER-PROTEIN] DEHYDRATASE"/>
    <property type="match status" value="1"/>
</dbReference>
<dbReference type="Pfam" id="PF07977">
    <property type="entry name" value="FabA"/>
    <property type="match status" value="1"/>
</dbReference>
<dbReference type="SUPFAM" id="SSF54637">
    <property type="entry name" value="Thioesterase/thiol ester dehydrase-isomerase"/>
    <property type="match status" value="1"/>
</dbReference>
<feature type="chain" id="PRO_1000205951" description="3-hydroxyacyl-[acyl-carrier-protein] dehydratase FabZ">
    <location>
        <begin position="1"/>
        <end position="140"/>
    </location>
</feature>
<feature type="active site" evidence="1">
    <location>
        <position position="46"/>
    </location>
</feature>
<keyword id="KW-0963">Cytoplasm</keyword>
<keyword id="KW-0441">Lipid A biosynthesis</keyword>
<keyword id="KW-0444">Lipid biosynthesis</keyword>
<keyword id="KW-0443">Lipid metabolism</keyword>
<keyword id="KW-0456">Lyase</keyword>
<keyword id="KW-1185">Reference proteome</keyword>
<name>FABZ_PSELT</name>
<accession>A8F4B1</accession>
<proteinExistence type="inferred from homology"/>